<feature type="chain" id="PRO_0000068687" description="Serine acetyltransferase">
    <location>
        <begin position="1"/>
        <end position="249"/>
    </location>
</feature>
<feature type="sequence conflict" description="In Ref. 1; BAA02919." evidence="2" ref="1">
    <original>I</original>
    <variation>S</variation>
    <location>
        <position position="80"/>
    </location>
</feature>
<comment type="catalytic activity">
    <reaction>
        <text>L-serine + acetyl-CoA = O-acetyl-L-serine + CoA</text>
        <dbReference type="Rhea" id="RHEA:24560"/>
        <dbReference type="ChEBI" id="CHEBI:33384"/>
        <dbReference type="ChEBI" id="CHEBI:57287"/>
        <dbReference type="ChEBI" id="CHEBI:57288"/>
        <dbReference type="ChEBI" id="CHEBI:58340"/>
        <dbReference type="EC" id="2.3.1.30"/>
    </reaction>
</comment>
<comment type="pathway">
    <text>Amino-acid biosynthesis; L-cysteine biosynthesis; L-cysteine from L-serine: step 1/2.</text>
</comment>
<comment type="subcellular location">
    <subcellularLocation>
        <location evidence="1">Cytoplasm</location>
    </subcellularLocation>
</comment>
<comment type="similarity">
    <text evidence="2">Belongs to the transferase hexapeptide repeat family.</text>
</comment>
<keyword id="KW-0012">Acyltransferase</keyword>
<keyword id="KW-0028">Amino-acid biosynthesis</keyword>
<keyword id="KW-0198">Cysteine biosynthesis</keyword>
<keyword id="KW-0963">Cytoplasm</keyword>
<keyword id="KW-1185">Reference proteome</keyword>
<keyword id="KW-0677">Repeat</keyword>
<keyword id="KW-0808">Transferase</keyword>
<accession>P74089</accession>
<accession>Q55209</accession>
<name>CYSE_SYNY3</name>
<gene>
    <name type="primary">cysE</name>
    <name type="ordered locus">slr1348</name>
</gene>
<sequence>MLNSLIADFRIIFERDPAARNWLEVLFCYPGLQALLIHRFSHRLYTLGLPFFPRLMSHLARFFTGIEIHPGAQIGQGVFIDHGMGVVIGETAIVGDYSLIYQGVTLGGTGKESGKRHPTLGENVVVGAGAKVLGNIAIGDNVRIGAGSVVLRDVPADFTVVGVPGRMVHPSGERVNPLEHGKLPDSEGKVIRLLLERIELLEQQVATLQQQQSEQAWESDYRSCSETDREPVLCRLGDREIEEFLGGTL</sequence>
<proteinExistence type="inferred from homology"/>
<organism>
    <name type="scientific">Synechocystis sp. (strain ATCC 27184 / PCC 6803 / Kazusa)</name>
    <dbReference type="NCBI Taxonomy" id="1111708"/>
    <lineage>
        <taxon>Bacteria</taxon>
        <taxon>Bacillati</taxon>
        <taxon>Cyanobacteriota</taxon>
        <taxon>Cyanophyceae</taxon>
        <taxon>Synechococcales</taxon>
        <taxon>Merismopediaceae</taxon>
        <taxon>Synechocystis</taxon>
    </lineage>
</organism>
<reference key="1">
    <citation type="journal article" date="1995" name="Plant Mol. Biol.">
        <title>Sequence analysis of a DNA fragment from Synechocystis PCC6803 containing genes homologous to cysE (serine acetyltransferase) and pgi (glucose-6-phosphate isomerase).</title>
        <authorList>
            <person name="Sakamoto T."/>
            <person name="Wada H."/>
            <person name="Nishida I."/>
            <person name="Ohta H."/>
            <person name="Murata N."/>
        </authorList>
    </citation>
    <scope>NUCLEOTIDE SEQUENCE [GENOMIC DNA]</scope>
</reference>
<reference key="2">
    <citation type="journal article" date="1996" name="DNA Res.">
        <title>Sequence analysis of the genome of the unicellular cyanobacterium Synechocystis sp. strain PCC6803. II. Sequence determination of the entire genome and assignment of potential protein-coding regions.</title>
        <authorList>
            <person name="Kaneko T."/>
            <person name="Sato S."/>
            <person name="Kotani H."/>
            <person name="Tanaka A."/>
            <person name="Asamizu E."/>
            <person name="Nakamura Y."/>
            <person name="Miyajima N."/>
            <person name="Hirosawa M."/>
            <person name="Sugiura M."/>
            <person name="Sasamoto S."/>
            <person name="Kimura T."/>
            <person name="Hosouchi T."/>
            <person name="Matsuno A."/>
            <person name="Muraki A."/>
            <person name="Nakazaki N."/>
            <person name="Naruo K."/>
            <person name="Okumura S."/>
            <person name="Shimpo S."/>
            <person name="Takeuchi C."/>
            <person name="Wada T."/>
            <person name="Watanabe A."/>
            <person name="Yamada M."/>
            <person name="Yasuda M."/>
            <person name="Tabata S."/>
        </authorList>
    </citation>
    <scope>NUCLEOTIDE SEQUENCE [LARGE SCALE GENOMIC DNA]</scope>
    <source>
        <strain>ATCC 27184 / PCC 6803 / Kazusa</strain>
    </source>
</reference>
<dbReference type="EC" id="2.3.1.30"/>
<dbReference type="EMBL" id="D13777">
    <property type="protein sequence ID" value="BAA02919.1"/>
    <property type="molecule type" value="Genomic_DNA"/>
</dbReference>
<dbReference type="EMBL" id="BA000022">
    <property type="protein sequence ID" value="BAA18167.1"/>
    <property type="molecule type" value="Genomic_DNA"/>
</dbReference>
<dbReference type="PIR" id="S75606">
    <property type="entry name" value="S75606"/>
</dbReference>
<dbReference type="SMR" id="P74089"/>
<dbReference type="FunCoup" id="P74089">
    <property type="interactions" value="229"/>
</dbReference>
<dbReference type="IntAct" id="P74089">
    <property type="interactions" value="2"/>
</dbReference>
<dbReference type="STRING" id="1148.gene:10499040"/>
<dbReference type="PaxDb" id="1148-1653252"/>
<dbReference type="EnsemblBacteria" id="BAA18167">
    <property type="protein sequence ID" value="BAA18167"/>
    <property type="gene ID" value="BAA18167"/>
</dbReference>
<dbReference type="KEGG" id="syn:slr1348"/>
<dbReference type="eggNOG" id="COG1045">
    <property type="taxonomic scope" value="Bacteria"/>
</dbReference>
<dbReference type="InParanoid" id="P74089"/>
<dbReference type="PhylomeDB" id="P74089"/>
<dbReference type="UniPathway" id="UPA00136">
    <property type="reaction ID" value="UER00199"/>
</dbReference>
<dbReference type="Proteomes" id="UP000001425">
    <property type="component" value="Chromosome"/>
</dbReference>
<dbReference type="GO" id="GO:0031470">
    <property type="term" value="C:carboxysome"/>
    <property type="evidence" value="ECO:0007669"/>
    <property type="project" value="UniProtKB-ARBA"/>
</dbReference>
<dbReference type="GO" id="GO:0005829">
    <property type="term" value="C:cytosol"/>
    <property type="evidence" value="ECO:0000318"/>
    <property type="project" value="GO_Central"/>
</dbReference>
<dbReference type="GO" id="GO:0009001">
    <property type="term" value="F:serine O-acetyltransferase activity"/>
    <property type="evidence" value="ECO:0000318"/>
    <property type="project" value="GO_Central"/>
</dbReference>
<dbReference type="GO" id="GO:0043886">
    <property type="term" value="F:structural constituent of carboxysome shell"/>
    <property type="evidence" value="ECO:0007669"/>
    <property type="project" value="UniProtKB-ARBA"/>
</dbReference>
<dbReference type="GO" id="GO:0006535">
    <property type="term" value="P:cysteine biosynthetic process from serine"/>
    <property type="evidence" value="ECO:0007669"/>
    <property type="project" value="InterPro"/>
</dbReference>
<dbReference type="CDD" id="cd03354">
    <property type="entry name" value="LbH_SAT"/>
    <property type="match status" value="1"/>
</dbReference>
<dbReference type="FunFam" id="1.10.3130.10:FF:000003">
    <property type="entry name" value="Serine acetyltransferase"/>
    <property type="match status" value="1"/>
</dbReference>
<dbReference type="FunFam" id="2.160.10.10:FF:000007">
    <property type="entry name" value="Serine acetyltransferase"/>
    <property type="match status" value="1"/>
</dbReference>
<dbReference type="Gene3D" id="2.160.10.10">
    <property type="entry name" value="Hexapeptide repeat proteins"/>
    <property type="match status" value="1"/>
</dbReference>
<dbReference type="Gene3D" id="1.10.3130.10">
    <property type="entry name" value="serine acetyltransferase, domain 1"/>
    <property type="match status" value="1"/>
</dbReference>
<dbReference type="InterPro" id="IPR001451">
    <property type="entry name" value="Hexapep"/>
</dbReference>
<dbReference type="InterPro" id="IPR018357">
    <property type="entry name" value="Hexapep_transf_CS"/>
</dbReference>
<dbReference type="InterPro" id="IPR045304">
    <property type="entry name" value="LbH_SAT"/>
</dbReference>
<dbReference type="InterPro" id="IPR042122">
    <property type="entry name" value="Ser_AcTrfase_N_sf"/>
</dbReference>
<dbReference type="InterPro" id="IPR005881">
    <property type="entry name" value="Ser_O-AcTrfase"/>
</dbReference>
<dbReference type="InterPro" id="IPR053376">
    <property type="entry name" value="Serine_acetyltransferase"/>
</dbReference>
<dbReference type="InterPro" id="IPR011004">
    <property type="entry name" value="Trimer_LpxA-like_sf"/>
</dbReference>
<dbReference type="NCBIfam" id="TIGR01172">
    <property type="entry name" value="cysE"/>
    <property type="match status" value="1"/>
</dbReference>
<dbReference type="NCBIfam" id="NF041874">
    <property type="entry name" value="EPS_EpsC"/>
    <property type="match status" value="1"/>
</dbReference>
<dbReference type="PANTHER" id="PTHR42811">
    <property type="entry name" value="SERINE ACETYLTRANSFERASE"/>
    <property type="match status" value="1"/>
</dbReference>
<dbReference type="Pfam" id="PF00132">
    <property type="entry name" value="Hexapep"/>
    <property type="match status" value="1"/>
</dbReference>
<dbReference type="PIRSF" id="PIRSF000441">
    <property type="entry name" value="CysE"/>
    <property type="match status" value="1"/>
</dbReference>
<dbReference type="SUPFAM" id="SSF51161">
    <property type="entry name" value="Trimeric LpxA-like enzymes"/>
    <property type="match status" value="1"/>
</dbReference>
<dbReference type="PROSITE" id="PS00101">
    <property type="entry name" value="HEXAPEP_TRANSFERASES"/>
    <property type="match status" value="1"/>
</dbReference>
<protein>
    <recommendedName>
        <fullName>Serine acetyltransferase</fullName>
        <shortName>SAT</shortName>
        <ecNumber>2.3.1.30</ecNumber>
    </recommendedName>
</protein>
<evidence type="ECO:0000250" key="1"/>
<evidence type="ECO:0000305" key="2"/>